<keyword id="KW-1032">Host cell membrane</keyword>
<keyword id="KW-1035">Host cytoplasm</keyword>
<keyword id="KW-1043">Host membrane</keyword>
<keyword id="KW-0945">Host-virus interaction</keyword>
<keyword id="KW-0472">Membrane</keyword>
<keyword id="KW-0597">Phosphoprotein</keyword>
<keyword id="KW-1198">Viral budding</keyword>
<keyword id="KW-1187">Viral budding via the host ESCRT complexes</keyword>
<keyword id="KW-0468">Viral matrix protein</keyword>
<keyword id="KW-1188">Viral release from host cell</keyword>
<keyword id="KW-0946">Virion</keyword>
<protein>
    <recommendedName>
        <fullName>Matrix protein</fullName>
        <shortName>M protein</shortName>
    </recommendedName>
</protein>
<comment type="function">
    <text evidence="1">Plays a crucial role in virion assembly and budding. Forms a shell at the inner face of the plasma membrane and concentrates the HN and F glycoproteins. Acts as a negative regulator for transcription and replication by sticking to the nucleocapsid. This effect might be regulated by the cytoplasmic interaction with tubulin that dissociates the M protein from the nucleocapsid (By similarity).</text>
</comment>
<comment type="subunit">
    <text evidence="2">Homomultimer. Binds to the cytoplasmic regions of F and HN proteins. Interacts with nucleocapsid. Interacts with human alpha-tubulin and beta-tubulin. Interacts with host ANP32B.</text>
</comment>
<comment type="subcellular location">
    <subcellularLocation>
        <location evidence="3">Virion</location>
    </subcellularLocation>
    <subcellularLocation>
        <location evidence="1">Host cytoplasm</location>
    </subcellularLocation>
    <subcellularLocation>
        <location evidence="1">Host cell membrane</location>
        <topology evidence="1">Peripheral membrane protein</topology>
        <orientation evidence="1">Cytoplasmic side</orientation>
    </subcellularLocation>
    <text evidence="1">During bud formation, associates at the inner side of the plasma membrane of infected cells.</text>
</comment>
<comment type="domain">
    <text evidence="1">Late-budding domains (L domains) are short sequence motifs essential for viral particle budding. They recruit proteins of the host ESCRT machinery (Endosomal Sorting Complex Required for Transport) or ESCRT-associated proteins. The matrix protein contains one L domain: a YLDL motif (By similarity).</text>
</comment>
<comment type="PTM">
    <text evidence="1">A large portion is phosphorylated in the cytoplasm, but not in virion. However, this phosphorylation is not essential for virus replication (By similarity).</text>
</comment>
<comment type="similarity">
    <text evidence="3">Belongs to the morbillivirus/respirovirus/rubulavirus M protein family.</text>
</comment>
<organism>
    <name type="scientific">Sendai virus (strain Fushimi)</name>
    <name type="common">SeV</name>
    <dbReference type="NCBI Taxonomy" id="11195"/>
    <lineage>
        <taxon>Viruses</taxon>
        <taxon>Riboviria</taxon>
        <taxon>Orthornavirae</taxon>
        <taxon>Negarnaviricota</taxon>
        <taxon>Haploviricotina</taxon>
        <taxon>Monjiviricetes</taxon>
        <taxon>Mononegavirales</taxon>
        <taxon>Paramyxoviridae</taxon>
        <taxon>Feraresvirinae</taxon>
        <taxon>Respirovirus</taxon>
        <taxon>Respirovirus muris</taxon>
    </lineage>
</organism>
<gene>
    <name type="primary">M</name>
</gene>
<feature type="chain" id="PRO_0000142773" description="Matrix protein">
    <location>
        <begin position="1"/>
        <end position="348"/>
    </location>
</feature>
<feature type="short sequence motif" description="YLDL motif" evidence="1">
    <location>
        <begin position="50"/>
        <end position="53"/>
    </location>
</feature>
<feature type="modified residue" description="Phosphoserine; by host" evidence="1">
    <location>
        <position position="70"/>
    </location>
</feature>
<name>MATRX_SENDF</name>
<sequence length="348" mass="38600">MADIYRFPKFSYEDNGTVEPLPLRTGPDKKAIPYIRIIKVGDPPKHGVRYLDLLLLGFFETPKQTTNLGSVSDLTEPTSYSICGSGSLPIGVAKYYGTDQELLKACTDLRITVRRTVRAGEMIVYMVDSIGAPLLPWSGRLRQGMIFNANKVALAPQCLPVDKDIRFRVVFVNGTSLGAITIAKIPKTLADLALPNSISVNLLVTLKTGISTEQKGVLPVLDDQGEKKLNFMVHLGLIRRKVGKIYSVEYCKSKIERMRLIFSLGLIGGISFHVQVTGTLSKTFMSQLAWKRAVCFPLMDVNPHMNLVIWAASVEITGVDAVFQPAIPRDFRYYPNVVAKNIGRIRKL</sequence>
<accession>P17748</accession>
<reference key="1">
    <citation type="journal article" date="1990" name="Nucleic Acids Res.">
        <title>Cloning and sequencing of the matrix protein gene (M) of Sendai virus (strain Fushimi).</title>
        <authorList>
            <person name="Willenbrink W."/>
            <person name="Neubert W.J."/>
        </authorList>
    </citation>
    <scope>NUCLEOTIDE SEQUENCE [GENOMIC RNA]</scope>
</reference>
<proteinExistence type="evidence at transcript level"/>
<dbReference type="EMBL" id="X53056">
    <property type="protein sequence ID" value="CAA37223.1"/>
    <property type="molecule type" value="mRNA"/>
</dbReference>
<dbReference type="PIR" id="S10330">
    <property type="entry name" value="MFNZFU"/>
</dbReference>
<dbReference type="SMR" id="P17748"/>
<dbReference type="Proteomes" id="UP000006825">
    <property type="component" value="Genome"/>
</dbReference>
<dbReference type="GO" id="GO:0030430">
    <property type="term" value="C:host cell cytoplasm"/>
    <property type="evidence" value="ECO:0007669"/>
    <property type="project" value="UniProtKB-SubCell"/>
</dbReference>
<dbReference type="GO" id="GO:0020002">
    <property type="term" value="C:host cell plasma membrane"/>
    <property type="evidence" value="ECO:0007669"/>
    <property type="project" value="UniProtKB-SubCell"/>
</dbReference>
<dbReference type="GO" id="GO:0016020">
    <property type="term" value="C:membrane"/>
    <property type="evidence" value="ECO:0007669"/>
    <property type="project" value="UniProtKB-KW"/>
</dbReference>
<dbReference type="GO" id="GO:0044423">
    <property type="term" value="C:virion component"/>
    <property type="evidence" value="ECO:0007669"/>
    <property type="project" value="UniProtKB-KW"/>
</dbReference>
<dbReference type="GO" id="GO:0039660">
    <property type="term" value="F:structural constituent of virion"/>
    <property type="evidence" value="ECO:0007669"/>
    <property type="project" value="UniProtKB-KW"/>
</dbReference>
<dbReference type="GO" id="GO:0039702">
    <property type="term" value="P:viral budding via host ESCRT complex"/>
    <property type="evidence" value="ECO:0007669"/>
    <property type="project" value="UniProtKB-KW"/>
</dbReference>
<dbReference type="FunFam" id="2.70.20.50:FF:000003">
    <property type="entry name" value="Matrix protein"/>
    <property type="match status" value="1"/>
</dbReference>
<dbReference type="Gene3D" id="2.70.20.60">
    <property type="entry name" value="Viral matrix protein, C-terminal domain"/>
    <property type="match status" value="1"/>
</dbReference>
<dbReference type="Gene3D" id="2.70.20.50">
    <property type="entry name" value="Viral matrix protein, N-terminal domain"/>
    <property type="match status" value="1"/>
</dbReference>
<dbReference type="InterPro" id="IPR042539">
    <property type="entry name" value="Matrix_C"/>
</dbReference>
<dbReference type="InterPro" id="IPR042540">
    <property type="entry name" value="Matrix_N"/>
</dbReference>
<dbReference type="InterPro" id="IPR055413">
    <property type="entry name" value="Matrix_Paramyxo_C"/>
</dbReference>
<dbReference type="InterPro" id="IPR000982">
    <property type="entry name" value="Matrix_Paramyxo_N"/>
</dbReference>
<dbReference type="Pfam" id="PF23765">
    <property type="entry name" value="Matrix_Paramyxo_C"/>
    <property type="match status" value="1"/>
</dbReference>
<dbReference type="Pfam" id="PF00661">
    <property type="entry name" value="Matrix_Paramyxo_N"/>
    <property type="match status" value="1"/>
</dbReference>
<evidence type="ECO:0000250" key="1"/>
<evidence type="ECO:0000250" key="2">
    <source>
        <dbReference type="UniProtKB" id="P06446"/>
    </source>
</evidence>
<evidence type="ECO:0000305" key="3"/>
<organismHost>
    <name type="scientific">Cavia cutleri</name>
    <name type="common">Guinea pig</name>
    <dbReference type="NCBI Taxonomy" id="10144"/>
</organismHost>
<organismHost>
    <name type="scientific">Cricetidae sp.</name>
    <name type="common">Hamster</name>
    <dbReference type="NCBI Taxonomy" id="36483"/>
</organismHost>
<organismHost>
    <name type="scientific">Mus musculus</name>
    <name type="common">Mouse</name>
    <dbReference type="NCBI Taxonomy" id="10090"/>
</organismHost>
<organismHost>
    <name type="scientific">Rattus norvegicus</name>
    <name type="common">Rat</name>
    <dbReference type="NCBI Taxonomy" id="10116"/>
</organismHost>